<reference key="1">
    <citation type="journal article" date="2002" name="Nature">
        <title>The genome sequence of Schizosaccharomyces pombe.</title>
        <authorList>
            <person name="Wood V."/>
            <person name="Gwilliam R."/>
            <person name="Rajandream M.A."/>
            <person name="Lyne M.H."/>
            <person name="Lyne R."/>
            <person name="Stewart A."/>
            <person name="Sgouros J.G."/>
            <person name="Peat N."/>
            <person name="Hayles J."/>
            <person name="Baker S.G."/>
            <person name="Basham D."/>
            <person name="Bowman S."/>
            <person name="Brooks K."/>
            <person name="Brown D."/>
            <person name="Brown S."/>
            <person name="Chillingworth T."/>
            <person name="Churcher C.M."/>
            <person name="Collins M."/>
            <person name="Connor R."/>
            <person name="Cronin A."/>
            <person name="Davis P."/>
            <person name="Feltwell T."/>
            <person name="Fraser A."/>
            <person name="Gentles S."/>
            <person name="Goble A."/>
            <person name="Hamlin N."/>
            <person name="Harris D.E."/>
            <person name="Hidalgo J."/>
            <person name="Hodgson G."/>
            <person name="Holroyd S."/>
            <person name="Hornsby T."/>
            <person name="Howarth S."/>
            <person name="Huckle E.J."/>
            <person name="Hunt S."/>
            <person name="Jagels K."/>
            <person name="James K.D."/>
            <person name="Jones L."/>
            <person name="Jones M."/>
            <person name="Leather S."/>
            <person name="McDonald S."/>
            <person name="McLean J."/>
            <person name="Mooney P."/>
            <person name="Moule S."/>
            <person name="Mungall K.L."/>
            <person name="Murphy L.D."/>
            <person name="Niblett D."/>
            <person name="Odell C."/>
            <person name="Oliver K."/>
            <person name="O'Neil S."/>
            <person name="Pearson D."/>
            <person name="Quail M.A."/>
            <person name="Rabbinowitsch E."/>
            <person name="Rutherford K.M."/>
            <person name="Rutter S."/>
            <person name="Saunders D."/>
            <person name="Seeger K."/>
            <person name="Sharp S."/>
            <person name="Skelton J."/>
            <person name="Simmonds M.N."/>
            <person name="Squares R."/>
            <person name="Squares S."/>
            <person name="Stevens K."/>
            <person name="Taylor K."/>
            <person name="Taylor R.G."/>
            <person name="Tivey A."/>
            <person name="Walsh S.V."/>
            <person name="Warren T."/>
            <person name="Whitehead S."/>
            <person name="Woodward J.R."/>
            <person name="Volckaert G."/>
            <person name="Aert R."/>
            <person name="Robben J."/>
            <person name="Grymonprez B."/>
            <person name="Weltjens I."/>
            <person name="Vanstreels E."/>
            <person name="Rieger M."/>
            <person name="Schaefer M."/>
            <person name="Mueller-Auer S."/>
            <person name="Gabel C."/>
            <person name="Fuchs M."/>
            <person name="Duesterhoeft A."/>
            <person name="Fritzc C."/>
            <person name="Holzer E."/>
            <person name="Moestl D."/>
            <person name="Hilbert H."/>
            <person name="Borzym K."/>
            <person name="Langer I."/>
            <person name="Beck A."/>
            <person name="Lehrach H."/>
            <person name="Reinhardt R."/>
            <person name="Pohl T.M."/>
            <person name="Eger P."/>
            <person name="Zimmermann W."/>
            <person name="Wedler H."/>
            <person name="Wambutt R."/>
            <person name="Purnelle B."/>
            <person name="Goffeau A."/>
            <person name="Cadieu E."/>
            <person name="Dreano S."/>
            <person name="Gloux S."/>
            <person name="Lelaure V."/>
            <person name="Mottier S."/>
            <person name="Galibert F."/>
            <person name="Aves S.J."/>
            <person name="Xiang Z."/>
            <person name="Hunt C."/>
            <person name="Moore K."/>
            <person name="Hurst S.M."/>
            <person name="Lucas M."/>
            <person name="Rochet M."/>
            <person name="Gaillardin C."/>
            <person name="Tallada V.A."/>
            <person name="Garzon A."/>
            <person name="Thode G."/>
            <person name="Daga R.R."/>
            <person name="Cruzado L."/>
            <person name="Jimenez J."/>
            <person name="Sanchez M."/>
            <person name="del Rey F."/>
            <person name="Benito J."/>
            <person name="Dominguez A."/>
            <person name="Revuelta J.L."/>
            <person name="Moreno S."/>
            <person name="Armstrong J."/>
            <person name="Forsburg S.L."/>
            <person name="Cerutti L."/>
            <person name="Lowe T."/>
            <person name="McCombie W.R."/>
            <person name="Paulsen I."/>
            <person name="Potashkin J."/>
            <person name="Shpakovski G.V."/>
            <person name="Ussery D."/>
            <person name="Barrell B.G."/>
            <person name="Nurse P."/>
        </authorList>
    </citation>
    <scope>NUCLEOTIDE SEQUENCE [LARGE SCALE GENOMIC DNA]</scope>
    <source>
        <strain>972 / ATCC 24843</strain>
    </source>
</reference>
<reference key="2">
    <citation type="journal article" date="2000" name="Genes Cells">
        <title>Large-scale screening of intracellular protein localization in living fission yeast cells by the use of a GFP-fusion genomic DNA library.</title>
        <authorList>
            <person name="Ding D.-Q."/>
            <person name="Tomita Y."/>
            <person name="Yamamoto A."/>
            <person name="Chikashige Y."/>
            <person name="Haraguchi T."/>
            <person name="Hiraoka Y."/>
        </authorList>
    </citation>
    <scope>NUCLEOTIDE SEQUENCE [LARGE SCALE GENOMIC DNA] OF 502-620</scope>
    <scope>SUBCELLULAR LOCATION</scope>
    <source>
        <strain>ATCC 38364 / 968</strain>
    </source>
</reference>
<reference key="3">
    <citation type="journal article" date="2006" name="Nat. Biotechnol.">
        <title>ORFeome cloning and global analysis of protein localization in the fission yeast Schizosaccharomyces pombe.</title>
        <authorList>
            <person name="Matsuyama A."/>
            <person name="Arai R."/>
            <person name="Yashiroda Y."/>
            <person name="Shirai A."/>
            <person name="Kamata A."/>
            <person name="Sekido S."/>
            <person name="Kobayashi Y."/>
            <person name="Hashimoto A."/>
            <person name="Hamamoto M."/>
            <person name="Hiraoka Y."/>
            <person name="Horinouchi S."/>
            <person name="Yoshida M."/>
        </authorList>
    </citation>
    <scope>SUBCELLULAR LOCATION [LARGE SCALE ANALYSIS]</scope>
</reference>
<reference key="4">
    <citation type="journal article" date="2007" name="Nucleic Acids Res.">
        <title>Proteomic analysis of the U1 snRNP of Schizosaccharomyces pombe reveals three essential organism-specific proteins.</title>
        <authorList>
            <person name="Newo A.N.S."/>
            <person name="Luetzelberger M."/>
            <person name="Bottner C.A."/>
            <person name="Wehland J."/>
            <person name="Wissing J."/>
            <person name="Jaensch L."/>
            <person name="Kaeufer N.F."/>
        </authorList>
    </citation>
    <scope>IDENTIFICATION IN THE U1 SNRNP COMPLEX</scope>
    <scope>IDENTIFICATION BY MASS SPECTROMETRY</scope>
    <scope>FUNCTION</scope>
</reference>
<reference key="5">
    <citation type="journal article" date="2012" name="Mol. Cell. Biol.">
        <title>A U1-U2 snRNP interaction network during intron definition.</title>
        <authorList>
            <person name="Shao W."/>
            <person name="Kim H.S."/>
            <person name="Cao Y."/>
            <person name="Xu Y.Z."/>
            <person name="Query C.C."/>
        </authorList>
    </citation>
    <scope>INTERACTION WITH PRP5 AND USP102</scope>
</reference>
<accession>Q8WZK0</accession>
<accession>Q9UTX7</accession>
<feature type="chain" id="PRO_0000082027" description="U1 snRNP-associated protein usp107">
    <location>
        <begin position="1"/>
        <end position="695"/>
    </location>
</feature>
<feature type="domain" description="RRM" evidence="2">
    <location>
        <begin position="139"/>
        <end position="221"/>
    </location>
</feature>
<feature type="domain" description="PWI" evidence="3">
    <location>
        <begin position="605"/>
        <end position="695"/>
    </location>
</feature>
<feature type="region of interest" description="Disordered" evidence="4">
    <location>
        <begin position="85"/>
        <end position="134"/>
    </location>
</feature>
<feature type="region of interest" description="Disordered" evidence="4">
    <location>
        <begin position="487"/>
        <end position="509"/>
    </location>
</feature>
<feature type="region of interest" description="Disordered" evidence="4">
    <location>
        <begin position="540"/>
        <end position="590"/>
    </location>
</feature>
<feature type="coiled-coil region" evidence="1">
    <location>
        <begin position="265"/>
        <end position="369"/>
    </location>
</feature>
<feature type="compositionally biased region" description="Basic and acidic residues" evidence="4">
    <location>
        <begin position="85"/>
        <end position="96"/>
    </location>
</feature>
<feature type="compositionally biased region" description="Polar residues" evidence="4">
    <location>
        <begin position="98"/>
        <end position="113"/>
    </location>
</feature>
<feature type="compositionally biased region" description="Basic and acidic residues" evidence="4">
    <location>
        <begin position="487"/>
        <end position="506"/>
    </location>
</feature>
<feature type="compositionally biased region" description="Basic and acidic residues" evidence="4">
    <location>
        <begin position="548"/>
        <end position="561"/>
    </location>
</feature>
<protein>
    <recommendedName>
        <fullName>U1 snRNP-associated protein usp107</fullName>
    </recommendedName>
</protein>
<keyword id="KW-0175">Coiled coil</keyword>
<keyword id="KW-0963">Cytoplasm</keyword>
<keyword id="KW-0507">mRNA processing</keyword>
<keyword id="KW-0508">mRNA splicing</keyword>
<keyword id="KW-0539">Nucleus</keyword>
<keyword id="KW-1185">Reference proteome</keyword>
<keyword id="KW-0687">Ribonucleoprotein</keyword>
<keyword id="KW-0694">RNA-binding</keyword>
<keyword id="KW-0747">Spliceosome</keyword>
<gene>
    <name type="primary">usp107</name>
    <name type="synonym">snu71</name>
    <name type="ORF">SPBC839.10</name>
</gene>
<comment type="function">
    <text evidence="5">Component of the U1 snRNP particle, which recognizes and binds the 5'-splice site of pre-mRNA. Together with other non-snRNP factors, U1 snRNP forms the spliceosomal commitment complex, that targets pre-mRNA to the splicing pathway.</text>
</comment>
<comment type="subunit">
    <text evidence="5 6">Component of the U1 snRNP particle, a subcomplex of the spliceosome. Interacts with prp5 and usp102.</text>
</comment>
<comment type="subcellular location">
    <subcellularLocation>
        <location>Cytoplasm</location>
    </subcellularLocation>
    <subcellularLocation>
        <location>Nucleus</location>
    </subcellularLocation>
</comment>
<name>US107_SCHPO</name>
<sequence>MQRQNTQAAGMPMMPQVPMVGNGVPYVVPIQPVFAPLPPDYRSLYKKLYGQGAFLVDNPVEASSPYDFSQPILKFGKLPIKQVLRDNESQQKDRKNLPRNQKSNEIQEKQTFQTPSSEKSTTERESRPFVPPNSQQMRRMLFIGNIPKELDDFWMDKILRLSGKLASWRRVADADNSMTSFGFAEFESNEQFSRALEALNDFVVPPLYEGGPSTRLSLITDVENEGLYREWQTSRYARNKQKEINILQQIRFNLERICQDIGNFDVRSRIERAARQAREKNEKLLQNVKTSEIPINAADLEGINPELLPVIEEEIRSFRDQSAMKKREKQRSKDEYASLYKEYTRKEQEKLRKQNDDLQNLLSKHRISRIPMSTVNAFLRAEDSIPESFSDEQAYYEEKRRKDQLEAEEYYARERRWMNREKARTAALEREAAREEEERVNNTSFGTYLSEKLASFDDDEEARVSRDEYFVDRAAWIRHRAVARAREEDADALDRKEEERELRTRGEGATVETENYVENGKLVTSEMPQHENGPFKIKIQTKKPAVPSERREFGLPERLLLEEEDEEPQGYSPNPQKPKPAMEENDAEKTKRLRSLIEKIPVEAESLWALPIDWSKVTEDLLKEEMQAFVTKKIIEYIGIQEDSLITFTIDHIRQHKGAEQLVSELDLALAEDAPEFVSKVYRYLHVLLILRSEA</sequence>
<proteinExistence type="evidence at protein level"/>
<evidence type="ECO:0000255" key="1"/>
<evidence type="ECO:0000255" key="2">
    <source>
        <dbReference type="PROSITE-ProRule" id="PRU00176"/>
    </source>
</evidence>
<evidence type="ECO:0000255" key="3">
    <source>
        <dbReference type="PROSITE-ProRule" id="PRU00627"/>
    </source>
</evidence>
<evidence type="ECO:0000256" key="4">
    <source>
        <dbReference type="SAM" id="MobiDB-lite"/>
    </source>
</evidence>
<evidence type="ECO:0000269" key="5">
    <source>
    </source>
</evidence>
<evidence type="ECO:0000269" key="6">
    <source>
    </source>
</evidence>
<organism>
    <name type="scientific">Schizosaccharomyces pombe (strain 972 / ATCC 24843)</name>
    <name type="common">Fission yeast</name>
    <dbReference type="NCBI Taxonomy" id="284812"/>
    <lineage>
        <taxon>Eukaryota</taxon>
        <taxon>Fungi</taxon>
        <taxon>Dikarya</taxon>
        <taxon>Ascomycota</taxon>
        <taxon>Taphrinomycotina</taxon>
        <taxon>Schizosaccharomycetes</taxon>
        <taxon>Schizosaccharomycetales</taxon>
        <taxon>Schizosaccharomycetaceae</taxon>
        <taxon>Schizosaccharomyces</taxon>
    </lineage>
</organism>
<dbReference type="EMBL" id="CU329671">
    <property type="protein sequence ID" value="CAB46703.1"/>
    <property type="molecule type" value="Genomic_DNA"/>
</dbReference>
<dbReference type="EMBL" id="AB027940">
    <property type="protein sequence ID" value="BAA87244.1"/>
    <property type="molecule type" value="Genomic_DNA"/>
</dbReference>
<dbReference type="PIR" id="T40717">
    <property type="entry name" value="T40717"/>
</dbReference>
<dbReference type="RefSeq" id="NP_595250.1">
    <property type="nucleotide sequence ID" value="NM_001021156.2"/>
</dbReference>
<dbReference type="SMR" id="Q8WZK0"/>
<dbReference type="BioGRID" id="277725">
    <property type="interactions" value="14"/>
</dbReference>
<dbReference type="FunCoup" id="Q8WZK0">
    <property type="interactions" value="744"/>
</dbReference>
<dbReference type="IntAct" id="Q8WZK0">
    <property type="interactions" value="1"/>
</dbReference>
<dbReference type="STRING" id="284812.Q8WZK0"/>
<dbReference type="iPTMnet" id="Q8WZK0"/>
<dbReference type="PaxDb" id="4896-SPBC839.10.1"/>
<dbReference type="EnsemblFungi" id="SPBC839.10.1">
    <property type="protein sequence ID" value="SPBC839.10.1:pep"/>
    <property type="gene ID" value="SPBC839.10"/>
</dbReference>
<dbReference type="GeneID" id="2541211"/>
<dbReference type="KEGG" id="spo:2541211"/>
<dbReference type="PomBase" id="SPBC839.10">
    <property type="gene designation" value="usp107"/>
</dbReference>
<dbReference type="VEuPathDB" id="FungiDB:SPBC839.10"/>
<dbReference type="eggNOG" id="KOG2253">
    <property type="taxonomic scope" value="Eukaryota"/>
</dbReference>
<dbReference type="HOGENOM" id="CLU_413975_0_0_1"/>
<dbReference type="InParanoid" id="Q8WZK0"/>
<dbReference type="OMA" id="DGCVNKK"/>
<dbReference type="PhylomeDB" id="Q8WZK0"/>
<dbReference type="PRO" id="PR:Q8WZK0"/>
<dbReference type="Proteomes" id="UP000002485">
    <property type="component" value="Chromosome II"/>
</dbReference>
<dbReference type="GO" id="GO:0005829">
    <property type="term" value="C:cytosol"/>
    <property type="evidence" value="ECO:0007005"/>
    <property type="project" value="PomBase"/>
</dbReference>
<dbReference type="GO" id="GO:0005634">
    <property type="term" value="C:nucleus"/>
    <property type="evidence" value="ECO:0007005"/>
    <property type="project" value="PomBase"/>
</dbReference>
<dbReference type="GO" id="GO:0005685">
    <property type="term" value="C:U1 snRNP"/>
    <property type="evidence" value="ECO:0000314"/>
    <property type="project" value="PomBase"/>
</dbReference>
<dbReference type="GO" id="GO:0071004">
    <property type="term" value="C:U2-type prespliceosome"/>
    <property type="evidence" value="ECO:0000266"/>
    <property type="project" value="PomBase"/>
</dbReference>
<dbReference type="GO" id="GO:0003729">
    <property type="term" value="F:mRNA binding"/>
    <property type="evidence" value="ECO:0000318"/>
    <property type="project" value="GO_Central"/>
</dbReference>
<dbReference type="GO" id="GO:0000395">
    <property type="term" value="P:mRNA 5'-splice site recognition"/>
    <property type="evidence" value="ECO:0000305"/>
    <property type="project" value="PomBase"/>
</dbReference>
<dbReference type="CDD" id="cd12446">
    <property type="entry name" value="RRM_RBM25"/>
    <property type="match status" value="1"/>
</dbReference>
<dbReference type="Gene3D" id="3.30.70.330">
    <property type="match status" value="1"/>
</dbReference>
<dbReference type="Gene3D" id="1.20.1390.10">
    <property type="entry name" value="PWI domain"/>
    <property type="match status" value="1"/>
</dbReference>
<dbReference type="InterPro" id="IPR012677">
    <property type="entry name" value="Nucleotide-bd_a/b_plait_sf"/>
</dbReference>
<dbReference type="InterPro" id="IPR002483">
    <property type="entry name" value="PWI_dom"/>
</dbReference>
<dbReference type="InterPro" id="IPR035979">
    <property type="entry name" value="RBD_domain_sf"/>
</dbReference>
<dbReference type="InterPro" id="IPR052768">
    <property type="entry name" value="RBM25"/>
</dbReference>
<dbReference type="InterPro" id="IPR034268">
    <property type="entry name" value="RBM25_RRM"/>
</dbReference>
<dbReference type="InterPro" id="IPR000504">
    <property type="entry name" value="RRM_dom"/>
</dbReference>
<dbReference type="PANTHER" id="PTHR18806">
    <property type="entry name" value="RBM25 PROTEIN"/>
    <property type="match status" value="1"/>
</dbReference>
<dbReference type="PANTHER" id="PTHR18806:SF4">
    <property type="entry name" value="RNA-BINDING PROTEIN 25"/>
    <property type="match status" value="1"/>
</dbReference>
<dbReference type="Pfam" id="PF01480">
    <property type="entry name" value="PWI"/>
    <property type="match status" value="1"/>
</dbReference>
<dbReference type="Pfam" id="PF00076">
    <property type="entry name" value="RRM_1"/>
    <property type="match status" value="1"/>
</dbReference>
<dbReference type="SMART" id="SM00311">
    <property type="entry name" value="PWI"/>
    <property type="match status" value="1"/>
</dbReference>
<dbReference type="SUPFAM" id="SSF54928">
    <property type="entry name" value="RNA-binding domain, RBD"/>
    <property type="match status" value="1"/>
</dbReference>
<dbReference type="PROSITE" id="PS51025">
    <property type="entry name" value="PWI"/>
    <property type="match status" value="1"/>
</dbReference>
<dbReference type="PROSITE" id="PS50102">
    <property type="entry name" value="RRM"/>
    <property type="match status" value="1"/>
</dbReference>